<sequence length="130" mass="15104">MKRRTARERAMQALYQMDITGELEPKVAVENTLDEGEETNEFLESLVVGFVENKEAIDEAIRQNLKKWKLERISIVDRSILRVAVYEMKYMEEIPHNVTINEAIEIAKTFGDEESRRFINGVLSNIKDTL</sequence>
<gene>
    <name evidence="1" type="primary">nusB</name>
    <name type="ordered locus">BC_4181</name>
</gene>
<feature type="chain" id="PRO_0000176506" description="Transcription antitermination protein NusB">
    <location>
        <begin position="1"/>
        <end position="130"/>
    </location>
</feature>
<organism>
    <name type="scientific">Bacillus cereus (strain ATCC 14579 / DSM 31 / CCUG 7414 / JCM 2152 / NBRC 15305 / NCIMB 9373 / NCTC 2599 / NRRL B-3711)</name>
    <dbReference type="NCBI Taxonomy" id="226900"/>
    <lineage>
        <taxon>Bacteria</taxon>
        <taxon>Bacillati</taxon>
        <taxon>Bacillota</taxon>
        <taxon>Bacilli</taxon>
        <taxon>Bacillales</taxon>
        <taxon>Bacillaceae</taxon>
        <taxon>Bacillus</taxon>
        <taxon>Bacillus cereus group</taxon>
    </lineage>
</organism>
<reference key="1">
    <citation type="journal article" date="2003" name="Nature">
        <title>Genome sequence of Bacillus cereus and comparative analysis with Bacillus anthracis.</title>
        <authorList>
            <person name="Ivanova N."/>
            <person name="Sorokin A."/>
            <person name="Anderson I."/>
            <person name="Galleron N."/>
            <person name="Candelon B."/>
            <person name="Kapatral V."/>
            <person name="Bhattacharyya A."/>
            <person name="Reznik G."/>
            <person name="Mikhailova N."/>
            <person name="Lapidus A."/>
            <person name="Chu L."/>
            <person name="Mazur M."/>
            <person name="Goltsman E."/>
            <person name="Larsen N."/>
            <person name="D'Souza M."/>
            <person name="Walunas T."/>
            <person name="Grechkin Y."/>
            <person name="Pusch G."/>
            <person name="Haselkorn R."/>
            <person name="Fonstein M."/>
            <person name="Ehrlich S.D."/>
            <person name="Overbeek R."/>
            <person name="Kyrpides N.C."/>
        </authorList>
    </citation>
    <scope>NUCLEOTIDE SEQUENCE [LARGE SCALE GENOMIC DNA]</scope>
    <source>
        <strain>ATCC 14579 / DSM 31 / CCUG 7414 / JCM 2152 / NBRC 15305 / NCIMB 9373 / NCTC 2599 / NRRL B-3711</strain>
    </source>
</reference>
<dbReference type="EMBL" id="AE016877">
    <property type="protein sequence ID" value="AAP11096.1"/>
    <property type="molecule type" value="Genomic_DNA"/>
</dbReference>
<dbReference type="RefSeq" id="NP_833895.1">
    <property type="nucleotide sequence ID" value="NC_004722.1"/>
</dbReference>
<dbReference type="RefSeq" id="WP_000830247.1">
    <property type="nucleotide sequence ID" value="NZ_CP138336.1"/>
</dbReference>
<dbReference type="SMR" id="Q818R4"/>
<dbReference type="STRING" id="226900.BC_4181"/>
<dbReference type="GeneID" id="72450865"/>
<dbReference type="KEGG" id="bce:BC4181"/>
<dbReference type="PATRIC" id="fig|226900.8.peg.4321"/>
<dbReference type="HOGENOM" id="CLU_087843_3_3_9"/>
<dbReference type="OrthoDB" id="9811381at2"/>
<dbReference type="Proteomes" id="UP000001417">
    <property type="component" value="Chromosome"/>
</dbReference>
<dbReference type="GO" id="GO:0005829">
    <property type="term" value="C:cytosol"/>
    <property type="evidence" value="ECO:0000318"/>
    <property type="project" value="GO_Central"/>
</dbReference>
<dbReference type="GO" id="GO:0003723">
    <property type="term" value="F:RNA binding"/>
    <property type="evidence" value="ECO:0007669"/>
    <property type="project" value="UniProtKB-UniRule"/>
</dbReference>
<dbReference type="GO" id="GO:0006353">
    <property type="term" value="P:DNA-templated transcription termination"/>
    <property type="evidence" value="ECO:0007669"/>
    <property type="project" value="UniProtKB-UniRule"/>
</dbReference>
<dbReference type="GO" id="GO:0031564">
    <property type="term" value="P:transcription antitermination"/>
    <property type="evidence" value="ECO:0007669"/>
    <property type="project" value="UniProtKB-KW"/>
</dbReference>
<dbReference type="CDD" id="cd00619">
    <property type="entry name" value="Terminator_NusB"/>
    <property type="match status" value="1"/>
</dbReference>
<dbReference type="FunFam" id="1.10.940.10:FF:000003">
    <property type="entry name" value="Transcription antitermination factor NusB"/>
    <property type="match status" value="1"/>
</dbReference>
<dbReference type="Gene3D" id="1.10.940.10">
    <property type="entry name" value="NusB-like"/>
    <property type="match status" value="1"/>
</dbReference>
<dbReference type="HAMAP" id="MF_00073">
    <property type="entry name" value="NusB"/>
    <property type="match status" value="1"/>
</dbReference>
<dbReference type="InterPro" id="IPR035926">
    <property type="entry name" value="NusB-like_sf"/>
</dbReference>
<dbReference type="InterPro" id="IPR011605">
    <property type="entry name" value="NusB_fam"/>
</dbReference>
<dbReference type="InterPro" id="IPR006027">
    <property type="entry name" value="NusB_RsmB_TIM44"/>
</dbReference>
<dbReference type="NCBIfam" id="TIGR01951">
    <property type="entry name" value="nusB"/>
    <property type="match status" value="1"/>
</dbReference>
<dbReference type="NCBIfam" id="NF001223">
    <property type="entry name" value="PRK00202.1-1"/>
    <property type="match status" value="1"/>
</dbReference>
<dbReference type="PANTHER" id="PTHR11078:SF3">
    <property type="entry name" value="ANTITERMINATION NUSB DOMAIN-CONTAINING PROTEIN"/>
    <property type="match status" value="1"/>
</dbReference>
<dbReference type="PANTHER" id="PTHR11078">
    <property type="entry name" value="N UTILIZATION SUBSTANCE PROTEIN B-RELATED"/>
    <property type="match status" value="1"/>
</dbReference>
<dbReference type="Pfam" id="PF01029">
    <property type="entry name" value="NusB"/>
    <property type="match status" value="1"/>
</dbReference>
<dbReference type="SUPFAM" id="SSF48013">
    <property type="entry name" value="NusB-like"/>
    <property type="match status" value="1"/>
</dbReference>
<evidence type="ECO:0000255" key="1">
    <source>
        <dbReference type="HAMAP-Rule" id="MF_00073"/>
    </source>
</evidence>
<proteinExistence type="inferred from homology"/>
<comment type="function">
    <text evidence="1">Involved in transcription antitermination. Required for transcription of ribosomal RNA (rRNA) genes. Binds specifically to the boxA antiterminator sequence of the ribosomal RNA (rrn) operons.</text>
</comment>
<comment type="similarity">
    <text evidence="1">Belongs to the NusB family.</text>
</comment>
<name>NUSB_BACCR</name>
<accession>Q818R4</accession>
<keyword id="KW-1185">Reference proteome</keyword>
<keyword id="KW-0694">RNA-binding</keyword>
<keyword id="KW-0804">Transcription</keyword>
<keyword id="KW-0889">Transcription antitermination</keyword>
<keyword id="KW-0805">Transcription regulation</keyword>
<protein>
    <recommendedName>
        <fullName evidence="1">Transcription antitermination protein NusB</fullName>
    </recommendedName>
    <alternativeName>
        <fullName evidence="1">Antitermination factor NusB</fullName>
    </alternativeName>
</protein>